<reference key="1">
    <citation type="journal article" date="1993" name="J. Neurosci. Res.">
        <title>Molecular cloning of the myelin basic proteins in the shark, Squalus acanthias, and the ray, Raja erinacia.</title>
        <authorList>
            <person name="Spivack W.D."/>
            <person name="Zhong N."/>
            <person name="Salerno S."/>
            <person name="Saavedra R.A."/>
            <person name="Gould R.M."/>
        </authorList>
    </citation>
    <scope>NUCLEOTIDE SEQUENCE [MRNA]</scope>
    <source>
        <tissue>Brain</tissue>
        <tissue>Spinal cord</tissue>
    </source>
</reference>
<reference key="2">
    <citation type="submission" date="2008-09" db="UniProtKB">
        <authorList>
            <person name="Gould R.M."/>
        </authorList>
    </citation>
    <scope>SEQUENCE REVISION TO 31</scope>
</reference>
<reference key="3">
    <citation type="journal article" date="2001" name="Neurochem. Res.">
        <title>Studies of posttranslational modifications in spiny dogfish myelin basic protein.</title>
        <authorList>
            <person name="Zand R."/>
            <person name="Jin X."/>
            <person name="Kim J."/>
            <person name="Wall D.B."/>
            <person name="Gould R."/>
            <person name="Lubman D.M."/>
        </authorList>
    </citation>
    <scope>CLEAVAGE OF INITIATOR METHIONINE</scope>
    <scope>ACETYLATION AT ALA-2</scope>
    <scope>PHOSPHORYLATION AT SER-73; SER-84; SER-121; SER-122; SER-135; SER-139 AND SER-140</scope>
    <scope>DEAMIDATION AT GLN-12</scope>
    <scope>HYDROXYLATION</scope>
    <scope>CITRULLINATION</scope>
    <scope>IDENTIFICATION BY MASS SPECTROMETRY</scope>
</reference>
<organism>
    <name type="scientific">Squalus acanthias</name>
    <name type="common">Spiny dogfish</name>
    <dbReference type="NCBI Taxonomy" id="7797"/>
    <lineage>
        <taxon>Eukaryota</taxon>
        <taxon>Metazoa</taxon>
        <taxon>Chordata</taxon>
        <taxon>Craniata</taxon>
        <taxon>Vertebrata</taxon>
        <taxon>Chondrichthyes</taxon>
        <taxon>Elasmobranchii</taxon>
        <taxon>Squalomorphii</taxon>
        <taxon>Squaliformes</taxon>
        <taxon>Squalidae</taxon>
        <taxon>Squalus</taxon>
    </lineage>
</organism>
<proteinExistence type="evidence at protein level"/>
<dbReference type="EMBL" id="U44052">
    <property type="protein sequence ID" value="AAA96757.1"/>
    <property type="molecule type" value="mRNA"/>
</dbReference>
<dbReference type="SMR" id="Q91439"/>
<dbReference type="iPTMnet" id="Q91439"/>
<dbReference type="GO" id="GO:0043209">
    <property type="term" value="C:myelin sheath"/>
    <property type="evidence" value="ECO:0007669"/>
    <property type="project" value="UniProtKB-SubCell"/>
</dbReference>
<dbReference type="GO" id="GO:0005886">
    <property type="term" value="C:plasma membrane"/>
    <property type="evidence" value="ECO:0007669"/>
    <property type="project" value="UniProtKB-KW"/>
</dbReference>
<dbReference type="GO" id="GO:0019911">
    <property type="term" value="F:structural constituent of myelin sheath"/>
    <property type="evidence" value="ECO:0007669"/>
    <property type="project" value="InterPro"/>
</dbReference>
<dbReference type="InterPro" id="IPR000548">
    <property type="entry name" value="Myelin_BP"/>
</dbReference>
<dbReference type="PANTHER" id="PTHR11429">
    <property type="entry name" value="MYELIN BASIC PROTEIN"/>
    <property type="match status" value="1"/>
</dbReference>
<dbReference type="PANTHER" id="PTHR11429:SF0">
    <property type="entry name" value="MYELIN BASIC PROTEIN"/>
    <property type="match status" value="1"/>
</dbReference>
<dbReference type="Pfam" id="PF01669">
    <property type="entry name" value="Myelin_MBP"/>
    <property type="match status" value="1"/>
</dbReference>
<dbReference type="PRINTS" id="PR00212">
    <property type="entry name" value="MYELINMBP"/>
</dbReference>
<dbReference type="PROSITE" id="PS00569">
    <property type="entry name" value="MYELIN_MBP"/>
    <property type="match status" value="1"/>
</dbReference>
<gene>
    <name type="primary">MBP</name>
</gene>
<evidence type="ECO:0000256" key="1">
    <source>
        <dbReference type="SAM" id="MobiDB-lite"/>
    </source>
</evidence>
<evidence type="ECO:0000269" key="2">
    <source>
    </source>
</evidence>
<evidence type="ECO:0000305" key="3"/>
<evidence type="ECO:0000305" key="4">
    <source>
    </source>
</evidence>
<name>MBP_SQUAC</name>
<sequence>MASATTSDHAKQAGGAHSRQRDSGLLDQLGKLFGQEGSRKVPEKGKEPATRSVLMAPTTHKAHQGARRQTDDSPVVHFFKNMMSPKKAPVQQKAKSGASRAITKFIWGTDGQRAHYGAAGSSKSKDGFRGRRDGSGTLSSFFKMGKKGEGSPARR</sequence>
<accession>Q91439</accession>
<keyword id="KW-0007">Acetylation</keyword>
<keyword id="KW-1003">Cell membrane</keyword>
<keyword id="KW-0164">Citrullination</keyword>
<keyword id="KW-0379">Hydroxylation</keyword>
<keyword id="KW-0472">Membrane</keyword>
<keyword id="KW-0597">Phosphoprotein</keyword>
<protein>
    <recommendedName>
        <fullName>Myelin basic protein</fullName>
        <shortName>MBP</shortName>
    </recommendedName>
</protein>
<feature type="initiator methionine" description="Removed" evidence="2">
    <location>
        <position position="1"/>
    </location>
</feature>
<feature type="chain" id="PRO_0000159001" description="Myelin basic protein">
    <location>
        <begin position="2"/>
        <end position="155"/>
    </location>
</feature>
<feature type="region of interest" description="Disordered" evidence="1">
    <location>
        <begin position="1"/>
        <end position="72"/>
    </location>
</feature>
<feature type="region of interest" description="Disordered" evidence="1">
    <location>
        <begin position="113"/>
        <end position="155"/>
    </location>
</feature>
<feature type="compositionally biased region" description="Basic and acidic residues" evidence="1">
    <location>
        <begin position="37"/>
        <end position="49"/>
    </location>
</feature>
<feature type="compositionally biased region" description="Basic and acidic residues" evidence="1">
    <location>
        <begin position="123"/>
        <end position="134"/>
    </location>
</feature>
<feature type="modified residue" description="N-acetylalanine; in forms C1, C2, C3 and C8" evidence="2">
    <location>
        <position position="2"/>
    </location>
</feature>
<feature type="modified residue" description="Deamidated glutamine; in forms C1, C2 and C3" evidence="2">
    <location>
        <position position="12"/>
    </location>
</feature>
<feature type="modified residue" description="Phosphoserine; in forms C1, C2 and C3" evidence="2">
    <location>
        <position position="73"/>
    </location>
</feature>
<feature type="modified residue" description="Phosphoserine; in forms C1, C2 and C3" evidence="2">
    <location>
        <position position="84"/>
    </location>
</feature>
<feature type="modified residue" description="Phosphoserine; in forms C1 and C3" evidence="4">
    <location>
        <position position="121"/>
    </location>
</feature>
<feature type="modified residue" description="Phosphoserine; in forms C1 and C3" evidence="4">
    <location>
        <position position="122"/>
    </location>
</feature>
<feature type="modified residue" description="Phosphoserine; in forms C1, C2 and C3" evidence="2">
    <location>
        <position position="135"/>
    </location>
</feature>
<feature type="modified residue" description="Phosphoserine; in forms C1, C2 and C3" evidence="2">
    <location>
        <position position="139"/>
    </location>
</feature>
<feature type="modified residue" description="Phosphoserine; in forms C1, C2 and C3" evidence="2">
    <location>
        <position position="140"/>
    </location>
</feature>
<comment type="function">
    <text>This protein may function to maintain proper structure of myelin.</text>
</comment>
<comment type="subcellular location">
    <subcellularLocation>
        <location>Myelin membrane</location>
        <topology>Peripheral membrane protein</topology>
        <orientation>Cytoplasmic side</orientation>
    </subcellularLocation>
    <text>Cytoplasmic side of myelin.</text>
</comment>
<comment type="PTM">
    <text evidence="2">Several charge isomers are produced as a result of optional post-translational modifications, such as phosphorylation, deamidation and citrullination. Dogfish MBP contains four major components designated as C1, C2, C3 and C8. C1 and C3, but not C2 are phosphorylated at either Ser-121 or Ser-122; C2 is phosphorylated at 2 or 3 sites among Ser-135, Ser-139 and Ser-140. Hydroxyproline and citrulline are present but were not identified in either C1, C2 or C3, which suggests their presence in C8.</text>
</comment>
<comment type="similarity">
    <text evidence="3">Belongs to the myelin basic protein family.</text>
</comment>